<reference key="1">
    <citation type="journal article" date="1995" name="Proc. R. Soc. B">
        <title>Evolution and phylogeny of Wolbachia: reproductive parasites of arthropods.</title>
        <authorList>
            <person name="Werren J.H."/>
            <person name="Zhang W."/>
            <person name="Guo L.R."/>
        </authorList>
    </citation>
    <scope>NUCLEOTIDE SEQUENCE [GENOMIC DNA]</scope>
    <source>
        <strain>Group B</strain>
    </source>
</reference>
<gene>
    <name evidence="1" type="primary">ftsZ</name>
</gene>
<dbReference type="EMBL" id="U28209">
    <property type="protein sequence ID" value="AAA70116.1"/>
    <property type="molecule type" value="Genomic_DNA"/>
</dbReference>
<dbReference type="SMR" id="P50907"/>
<dbReference type="GO" id="GO:0032153">
    <property type="term" value="C:cell division site"/>
    <property type="evidence" value="ECO:0007669"/>
    <property type="project" value="TreeGrafter"/>
</dbReference>
<dbReference type="GO" id="GO:0005737">
    <property type="term" value="C:cytoplasm"/>
    <property type="evidence" value="ECO:0007669"/>
    <property type="project" value="UniProtKB-SubCell"/>
</dbReference>
<dbReference type="GO" id="GO:0005525">
    <property type="term" value="F:GTP binding"/>
    <property type="evidence" value="ECO:0007669"/>
    <property type="project" value="UniProtKB-KW"/>
</dbReference>
<dbReference type="GO" id="GO:0003924">
    <property type="term" value="F:GTPase activity"/>
    <property type="evidence" value="ECO:0007669"/>
    <property type="project" value="InterPro"/>
</dbReference>
<dbReference type="GO" id="GO:0000917">
    <property type="term" value="P:division septum assembly"/>
    <property type="evidence" value="ECO:0007669"/>
    <property type="project" value="UniProtKB-KW"/>
</dbReference>
<dbReference type="CDD" id="cd02201">
    <property type="entry name" value="FtsZ_type1"/>
    <property type="match status" value="1"/>
</dbReference>
<dbReference type="FunFam" id="3.30.1330.20:FF:000011">
    <property type="entry name" value="Cell division protein FtsZ"/>
    <property type="match status" value="1"/>
</dbReference>
<dbReference type="Gene3D" id="3.30.1330.20">
    <property type="entry name" value="Tubulin/FtsZ, C-terminal domain"/>
    <property type="match status" value="1"/>
</dbReference>
<dbReference type="Gene3D" id="3.40.50.1440">
    <property type="entry name" value="Tubulin/FtsZ, GTPase domain"/>
    <property type="match status" value="1"/>
</dbReference>
<dbReference type="HAMAP" id="MF_00909">
    <property type="entry name" value="FtsZ"/>
    <property type="match status" value="1"/>
</dbReference>
<dbReference type="InterPro" id="IPR000158">
    <property type="entry name" value="Cell_div_FtsZ"/>
</dbReference>
<dbReference type="InterPro" id="IPR020805">
    <property type="entry name" value="Cell_div_FtsZ_CS"/>
</dbReference>
<dbReference type="InterPro" id="IPR045061">
    <property type="entry name" value="FtsZ/CetZ"/>
</dbReference>
<dbReference type="InterPro" id="IPR024757">
    <property type="entry name" value="FtsZ_C"/>
</dbReference>
<dbReference type="InterPro" id="IPR008280">
    <property type="entry name" value="Tub_FtsZ_C"/>
</dbReference>
<dbReference type="InterPro" id="IPR037103">
    <property type="entry name" value="Tubulin/FtsZ-like_C"/>
</dbReference>
<dbReference type="InterPro" id="IPR018316">
    <property type="entry name" value="Tubulin/FtsZ_2-layer-sand-dom"/>
</dbReference>
<dbReference type="InterPro" id="IPR036525">
    <property type="entry name" value="Tubulin/FtsZ_GTPase_sf"/>
</dbReference>
<dbReference type="InterPro" id="IPR003008">
    <property type="entry name" value="Tubulin_FtsZ_GTPase"/>
</dbReference>
<dbReference type="NCBIfam" id="TIGR00065">
    <property type="entry name" value="ftsZ"/>
    <property type="match status" value="1"/>
</dbReference>
<dbReference type="PANTHER" id="PTHR30314">
    <property type="entry name" value="CELL DIVISION PROTEIN FTSZ-RELATED"/>
    <property type="match status" value="1"/>
</dbReference>
<dbReference type="PANTHER" id="PTHR30314:SF3">
    <property type="entry name" value="MITOCHONDRIAL DIVISION PROTEIN FSZA"/>
    <property type="match status" value="1"/>
</dbReference>
<dbReference type="Pfam" id="PF12327">
    <property type="entry name" value="FtsZ_C"/>
    <property type="match status" value="1"/>
</dbReference>
<dbReference type="Pfam" id="PF00091">
    <property type="entry name" value="Tubulin"/>
    <property type="match status" value="1"/>
</dbReference>
<dbReference type="PRINTS" id="PR00423">
    <property type="entry name" value="CELLDVISFTSZ"/>
</dbReference>
<dbReference type="SMART" id="SM00864">
    <property type="entry name" value="Tubulin"/>
    <property type="match status" value="1"/>
</dbReference>
<dbReference type="SMART" id="SM00865">
    <property type="entry name" value="Tubulin_C"/>
    <property type="match status" value="1"/>
</dbReference>
<dbReference type="SUPFAM" id="SSF55307">
    <property type="entry name" value="Tubulin C-terminal domain-like"/>
    <property type="match status" value="1"/>
</dbReference>
<dbReference type="SUPFAM" id="SSF52490">
    <property type="entry name" value="Tubulin nucleotide-binding domain-like"/>
    <property type="match status" value="1"/>
</dbReference>
<dbReference type="PROSITE" id="PS01135">
    <property type="entry name" value="FTSZ_2"/>
    <property type="match status" value="1"/>
</dbReference>
<feature type="chain" id="PRO_0000114394" description="Cell division protein FtsZ">
    <location>
        <begin position="1" status="less than"/>
        <end position="315" status="greater than"/>
    </location>
</feature>
<feature type="binding site" evidence="1">
    <location>
        <begin position="55"/>
        <end position="57"/>
    </location>
    <ligand>
        <name>GTP</name>
        <dbReference type="ChEBI" id="CHEBI:37565"/>
    </ligand>
</feature>
<feature type="binding site" evidence="1">
    <location>
        <position position="98"/>
    </location>
    <ligand>
        <name>GTP</name>
        <dbReference type="ChEBI" id="CHEBI:37565"/>
    </ligand>
</feature>
<feature type="binding site" evidence="1">
    <location>
        <position position="102"/>
    </location>
    <ligand>
        <name>GTP</name>
        <dbReference type="ChEBI" id="CHEBI:37565"/>
    </ligand>
</feature>
<feature type="binding site" evidence="1">
    <location>
        <position position="146"/>
    </location>
    <ligand>
        <name>GTP</name>
        <dbReference type="ChEBI" id="CHEBI:37565"/>
    </ligand>
</feature>
<feature type="non-terminal residue">
    <location>
        <position position="1"/>
    </location>
</feature>
<feature type="non-terminal residue">
    <location>
        <position position="315"/>
    </location>
</feature>
<name>FTSZ_WOLPI</name>
<comment type="function">
    <text evidence="1">Essential cell division protein that forms a contractile ring structure (Z ring) at the future cell division site. The regulation of the ring assembly controls the timing and the location of cell division. One of the functions of the FtsZ ring is to recruit other cell division proteins to the septum to produce a new cell wall between the dividing cells. Binds GTP and shows GTPase activity.</text>
</comment>
<comment type="subunit">
    <text evidence="1">Homodimer. Polymerizes to form a dynamic ring structure in a strictly GTP-dependent manner. Interacts directly with several other division proteins.</text>
</comment>
<comment type="subcellular location">
    <subcellularLocation>
        <location evidence="1">Cytoplasm</location>
    </subcellularLocation>
    <text evidence="1">Assembles at midcell at the inner surface of the cytoplasmic membrane.</text>
</comment>
<comment type="similarity">
    <text evidence="1">Belongs to the FtsZ family.</text>
</comment>
<accession>P50907</accession>
<evidence type="ECO:0000255" key="1">
    <source>
        <dbReference type="HAMAP-Rule" id="MF_00909"/>
    </source>
</evidence>
<organism>
    <name type="scientific">Wolbachia pipientis</name>
    <dbReference type="NCBI Taxonomy" id="955"/>
    <lineage>
        <taxon>Bacteria</taxon>
        <taxon>Pseudomonadati</taxon>
        <taxon>Pseudomonadota</taxon>
        <taxon>Alphaproteobacteria</taxon>
        <taxon>Rickettsiales</taxon>
        <taxon>Anaplasmataceae</taxon>
        <taxon>Wolbachieae</taxon>
        <taxon>Wolbachia</taxon>
    </lineage>
</organism>
<protein>
    <recommendedName>
        <fullName evidence="1">Cell division protein FtsZ</fullName>
    </recommendedName>
</protein>
<sequence>LCDKKIQLGINLTKGLGAGALPDVGKGAAEESIDEIMEHIKDSHMLFITAGMGGGTGTGAAPVIAKAAREARAVVKDKGAKEKKILTVGVVTKPFGFEGVRRMRIAELGLEELQKYVDTLIVIPNQNLFRIANEKTTFADAFQLADNVLHIGIRGVTDLMIMPGLINLDFADIETVMSEMGKAMIGTGEAEGEDRAISAAEAAISNPLLDNVSMKGAQGILINITGGGDMTLFEVDSAANRVREEVDENANIIFGATFDQAMEGRVRVSVLATGIDSCNDNSSVNQNKIPAEEKNFKWPYNQIPILETKEYASTE</sequence>
<keyword id="KW-0131">Cell cycle</keyword>
<keyword id="KW-0132">Cell division</keyword>
<keyword id="KW-0963">Cytoplasm</keyword>
<keyword id="KW-0342">GTP-binding</keyword>
<keyword id="KW-0547">Nucleotide-binding</keyword>
<keyword id="KW-0717">Septation</keyword>
<proteinExistence type="inferred from homology"/>